<name>CLPX_YERPP</name>
<proteinExistence type="inferred from homology"/>
<gene>
    <name evidence="1" type="primary">clpX</name>
    <name type="ordered locus">YPDSF_2792</name>
</gene>
<comment type="function">
    <text evidence="1">ATP-dependent specificity component of the Clp protease. It directs the protease to specific substrates. Can perform chaperone functions in the absence of ClpP.</text>
</comment>
<comment type="subunit">
    <text evidence="1">Component of the ClpX-ClpP complex. Forms a hexameric ring that, in the presence of ATP, binds to fourteen ClpP subunits assembled into a disk-like structure with a central cavity, resembling the structure of eukaryotic proteasomes.</text>
</comment>
<comment type="similarity">
    <text evidence="1">Belongs to the ClpX chaperone family.</text>
</comment>
<organism>
    <name type="scientific">Yersinia pestis (strain Pestoides F)</name>
    <dbReference type="NCBI Taxonomy" id="386656"/>
    <lineage>
        <taxon>Bacteria</taxon>
        <taxon>Pseudomonadati</taxon>
        <taxon>Pseudomonadota</taxon>
        <taxon>Gammaproteobacteria</taxon>
        <taxon>Enterobacterales</taxon>
        <taxon>Yersiniaceae</taxon>
        <taxon>Yersinia</taxon>
    </lineage>
</organism>
<protein>
    <recommendedName>
        <fullName evidence="1">ATP-dependent Clp protease ATP-binding subunit ClpX</fullName>
    </recommendedName>
</protein>
<feature type="chain" id="PRO_1000024707" description="ATP-dependent Clp protease ATP-binding subunit ClpX">
    <location>
        <begin position="1"/>
        <end position="423"/>
    </location>
</feature>
<feature type="domain" description="ClpX-type ZB" evidence="2">
    <location>
        <begin position="2"/>
        <end position="56"/>
    </location>
</feature>
<feature type="binding site" evidence="2">
    <location>
        <position position="15"/>
    </location>
    <ligand>
        <name>Zn(2+)</name>
        <dbReference type="ChEBI" id="CHEBI:29105"/>
    </ligand>
</feature>
<feature type="binding site" evidence="2">
    <location>
        <position position="18"/>
    </location>
    <ligand>
        <name>Zn(2+)</name>
        <dbReference type="ChEBI" id="CHEBI:29105"/>
    </ligand>
</feature>
<feature type="binding site" evidence="2">
    <location>
        <position position="37"/>
    </location>
    <ligand>
        <name>Zn(2+)</name>
        <dbReference type="ChEBI" id="CHEBI:29105"/>
    </ligand>
</feature>
<feature type="binding site" evidence="2">
    <location>
        <position position="40"/>
    </location>
    <ligand>
        <name>Zn(2+)</name>
        <dbReference type="ChEBI" id="CHEBI:29105"/>
    </ligand>
</feature>
<feature type="binding site" evidence="1">
    <location>
        <begin position="120"/>
        <end position="127"/>
    </location>
    <ligand>
        <name>ATP</name>
        <dbReference type="ChEBI" id="CHEBI:30616"/>
    </ligand>
</feature>
<accession>A4TPE2</accession>
<sequence>MTDKRKDGSGKLLYCSFCGKSQHEVRKLIAGPSVYICDECVDLCNDIIREEIKEVSPHRDRSSLPTPHEIRHHLDDYVIGQEPAKKVLAVAVYNHYKRLRNGDTSNGIELGKSNILLIGPTGSGKTLLAETLARLLDVPFTMADATTLTEAGYVGEDVENIIQKLLQKCDYDVQKAQRGIVYIDEIDKISRKSDNPSITRDVSGEGVQQALLKLIEGTIAAVPPQGGRKHPQQEFLQVDTSKILFICGGAFAGLDKVIGQRINTGSGIGFGAVVKGQSEKATEGELLSQVEPEDLIKFGLIPEFIGRLPVVATLSELSEDALIQILKEPKNALTKQYQALFSLEGVELEFRDEALTAIAKKAMARKTGARGLRSIVEGALLDTMYDLPSMDSVEKVVVDESVIAGQSAPMLIYGQPEAQASGE</sequence>
<evidence type="ECO:0000255" key="1">
    <source>
        <dbReference type="HAMAP-Rule" id="MF_00175"/>
    </source>
</evidence>
<evidence type="ECO:0000255" key="2">
    <source>
        <dbReference type="PROSITE-ProRule" id="PRU01250"/>
    </source>
</evidence>
<keyword id="KW-0067">ATP-binding</keyword>
<keyword id="KW-0143">Chaperone</keyword>
<keyword id="KW-0479">Metal-binding</keyword>
<keyword id="KW-0547">Nucleotide-binding</keyword>
<keyword id="KW-0862">Zinc</keyword>
<reference key="1">
    <citation type="submission" date="2007-02" db="EMBL/GenBank/DDBJ databases">
        <title>Complete sequence of chromosome of Yersinia pestis Pestoides F.</title>
        <authorList>
            <consortium name="US DOE Joint Genome Institute"/>
            <person name="Copeland A."/>
            <person name="Lucas S."/>
            <person name="Lapidus A."/>
            <person name="Barry K."/>
            <person name="Detter J.C."/>
            <person name="Glavina del Rio T."/>
            <person name="Hammon N."/>
            <person name="Israni S."/>
            <person name="Dalin E."/>
            <person name="Tice H."/>
            <person name="Pitluck S."/>
            <person name="Di Bartolo G."/>
            <person name="Chain P."/>
            <person name="Malfatti S."/>
            <person name="Shin M."/>
            <person name="Vergez L."/>
            <person name="Schmutz J."/>
            <person name="Larimer F."/>
            <person name="Land M."/>
            <person name="Hauser L."/>
            <person name="Worsham P."/>
            <person name="Chu M."/>
            <person name="Bearden S."/>
            <person name="Garcia E."/>
            <person name="Richardson P."/>
        </authorList>
    </citation>
    <scope>NUCLEOTIDE SEQUENCE [LARGE SCALE GENOMIC DNA]</scope>
    <source>
        <strain>Pestoides F</strain>
    </source>
</reference>
<dbReference type="EMBL" id="CP000668">
    <property type="protein sequence ID" value="ABP41154.1"/>
    <property type="molecule type" value="Genomic_DNA"/>
</dbReference>
<dbReference type="RefSeq" id="WP_002208641.1">
    <property type="nucleotide sequence ID" value="NZ_CP009715.1"/>
</dbReference>
<dbReference type="BMRB" id="A4TPE2"/>
<dbReference type="SMR" id="A4TPE2"/>
<dbReference type="GeneID" id="96664466"/>
<dbReference type="KEGG" id="ypp:YPDSF_2792"/>
<dbReference type="PATRIC" id="fig|386656.14.peg.49"/>
<dbReference type="GO" id="GO:0009376">
    <property type="term" value="C:HslUV protease complex"/>
    <property type="evidence" value="ECO:0007669"/>
    <property type="project" value="TreeGrafter"/>
</dbReference>
<dbReference type="GO" id="GO:0005524">
    <property type="term" value="F:ATP binding"/>
    <property type="evidence" value="ECO:0007669"/>
    <property type="project" value="UniProtKB-UniRule"/>
</dbReference>
<dbReference type="GO" id="GO:0016887">
    <property type="term" value="F:ATP hydrolysis activity"/>
    <property type="evidence" value="ECO:0007669"/>
    <property type="project" value="InterPro"/>
</dbReference>
<dbReference type="GO" id="GO:0140662">
    <property type="term" value="F:ATP-dependent protein folding chaperone"/>
    <property type="evidence" value="ECO:0007669"/>
    <property type="project" value="InterPro"/>
</dbReference>
<dbReference type="GO" id="GO:0046983">
    <property type="term" value="F:protein dimerization activity"/>
    <property type="evidence" value="ECO:0007669"/>
    <property type="project" value="InterPro"/>
</dbReference>
<dbReference type="GO" id="GO:0051082">
    <property type="term" value="F:unfolded protein binding"/>
    <property type="evidence" value="ECO:0007669"/>
    <property type="project" value="UniProtKB-UniRule"/>
</dbReference>
<dbReference type="GO" id="GO:0008270">
    <property type="term" value="F:zinc ion binding"/>
    <property type="evidence" value="ECO:0007669"/>
    <property type="project" value="InterPro"/>
</dbReference>
<dbReference type="GO" id="GO:0051301">
    <property type="term" value="P:cell division"/>
    <property type="evidence" value="ECO:0007669"/>
    <property type="project" value="TreeGrafter"/>
</dbReference>
<dbReference type="GO" id="GO:0051603">
    <property type="term" value="P:proteolysis involved in protein catabolic process"/>
    <property type="evidence" value="ECO:0007669"/>
    <property type="project" value="TreeGrafter"/>
</dbReference>
<dbReference type="CDD" id="cd19497">
    <property type="entry name" value="RecA-like_ClpX"/>
    <property type="match status" value="1"/>
</dbReference>
<dbReference type="FunFam" id="1.10.8.60:FF:000002">
    <property type="entry name" value="ATP-dependent Clp protease ATP-binding subunit ClpX"/>
    <property type="match status" value="1"/>
</dbReference>
<dbReference type="FunFam" id="3.40.50.300:FF:000005">
    <property type="entry name" value="ATP-dependent Clp protease ATP-binding subunit ClpX"/>
    <property type="match status" value="1"/>
</dbReference>
<dbReference type="Gene3D" id="1.10.8.60">
    <property type="match status" value="1"/>
</dbReference>
<dbReference type="Gene3D" id="6.20.220.10">
    <property type="entry name" value="ClpX chaperone, C4-type zinc finger domain"/>
    <property type="match status" value="1"/>
</dbReference>
<dbReference type="Gene3D" id="3.40.50.300">
    <property type="entry name" value="P-loop containing nucleotide triphosphate hydrolases"/>
    <property type="match status" value="1"/>
</dbReference>
<dbReference type="HAMAP" id="MF_00175">
    <property type="entry name" value="ClpX"/>
    <property type="match status" value="1"/>
</dbReference>
<dbReference type="InterPro" id="IPR003593">
    <property type="entry name" value="AAA+_ATPase"/>
</dbReference>
<dbReference type="InterPro" id="IPR050052">
    <property type="entry name" value="ATP-dep_Clp_protease_ClpX"/>
</dbReference>
<dbReference type="InterPro" id="IPR003959">
    <property type="entry name" value="ATPase_AAA_core"/>
</dbReference>
<dbReference type="InterPro" id="IPR019489">
    <property type="entry name" value="Clp_ATPase_C"/>
</dbReference>
<dbReference type="InterPro" id="IPR004487">
    <property type="entry name" value="Clp_protease_ATP-bd_su_ClpX"/>
</dbReference>
<dbReference type="InterPro" id="IPR046425">
    <property type="entry name" value="ClpX_bact"/>
</dbReference>
<dbReference type="InterPro" id="IPR027417">
    <property type="entry name" value="P-loop_NTPase"/>
</dbReference>
<dbReference type="InterPro" id="IPR010603">
    <property type="entry name" value="Znf_CppX_C4"/>
</dbReference>
<dbReference type="InterPro" id="IPR038366">
    <property type="entry name" value="Znf_CppX_C4_sf"/>
</dbReference>
<dbReference type="NCBIfam" id="TIGR00382">
    <property type="entry name" value="clpX"/>
    <property type="match status" value="1"/>
</dbReference>
<dbReference type="NCBIfam" id="NF003745">
    <property type="entry name" value="PRK05342.1"/>
    <property type="match status" value="1"/>
</dbReference>
<dbReference type="PANTHER" id="PTHR48102:SF7">
    <property type="entry name" value="ATP-DEPENDENT CLP PROTEASE ATP-BINDING SUBUNIT CLPX-LIKE, MITOCHONDRIAL"/>
    <property type="match status" value="1"/>
</dbReference>
<dbReference type="PANTHER" id="PTHR48102">
    <property type="entry name" value="ATP-DEPENDENT CLP PROTEASE ATP-BINDING SUBUNIT CLPX-LIKE, MITOCHONDRIAL-RELATED"/>
    <property type="match status" value="1"/>
</dbReference>
<dbReference type="Pfam" id="PF07724">
    <property type="entry name" value="AAA_2"/>
    <property type="match status" value="1"/>
</dbReference>
<dbReference type="Pfam" id="PF10431">
    <property type="entry name" value="ClpB_D2-small"/>
    <property type="match status" value="1"/>
</dbReference>
<dbReference type="Pfam" id="PF06689">
    <property type="entry name" value="zf-C4_ClpX"/>
    <property type="match status" value="1"/>
</dbReference>
<dbReference type="SMART" id="SM00382">
    <property type="entry name" value="AAA"/>
    <property type="match status" value="1"/>
</dbReference>
<dbReference type="SMART" id="SM01086">
    <property type="entry name" value="ClpB_D2-small"/>
    <property type="match status" value="1"/>
</dbReference>
<dbReference type="SMART" id="SM00994">
    <property type="entry name" value="zf-C4_ClpX"/>
    <property type="match status" value="1"/>
</dbReference>
<dbReference type="SUPFAM" id="SSF57716">
    <property type="entry name" value="Glucocorticoid receptor-like (DNA-binding domain)"/>
    <property type="match status" value="1"/>
</dbReference>
<dbReference type="SUPFAM" id="SSF52540">
    <property type="entry name" value="P-loop containing nucleoside triphosphate hydrolases"/>
    <property type="match status" value="1"/>
</dbReference>
<dbReference type="PROSITE" id="PS51902">
    <property type="entry name" value="CLPX_ZB"/>
    <property type="match status" value="1"/>
</dbReference>